<comment type="subunit">
    <text evidence="2">Component of the mitochondrial ribosome large subunit.</text>
</comment>
<comment type="subcellular location">
    <subcellularLocation>
        <location evidence="2">Mitochondrion</location>
    </subcellularLocation>
</comment>
<comment type="similarity">
    <text evidence="3">Belongs to the PPR family. P subfamily.</text>
</comment>
<comment type="online information" name="Pentatricopeptide repeat proteins">
    <link uri="https://ppr.plantenergy.uwa.edu.au"/>
</comment>
<reference key="1">
    <citation type="journal article" date="1999" name="Nature">
        <title>Sequence and analysis of chromosome 2 of the plant Arabidopsis thaliana.</title>
        <authorList>
            <person name="Lin X."/>
            <person name="Kaul S."/>
            <person name="Rounsley S.D."/>
            <person name="Shea T.P."/>
            <person name="Benito M.-I."/>
            <person name="Town C.D."/>
            <person name="Fujii C.Y."/>
            <person name="Mason T.M."/>
            <person name="Bowman C.L."/>
            <person name="Barnstead M.E."/>
            <person name="Feldblyum T.V."/>
            <person name="Buell C.R."/>
            <person name="Ketchum K.A."/>
            <person name="Lee J.J."/>
            <person name="Ronning C.M."/>
            <person name="Koo H.L."/>
            <person name="Moffat K.S."/>
            <person name="Cronin L.A."/>
            <person name="Shen M."/>
            <person name="Pai G."/>
            <person name="Van Aken S."/>
            <person name="Umayam L."/>
            <person name="Tallon L.J."/>
            <person name="Gill J.E."/>
            <person name="Adams M.D."/>
            <person name="Carrera A.J."/>
            <person name="Creasy T.H."/>
            <person name="Goodman H.M."/>
            <person name="Somerville C.R."/>
            <person name="Copenhaver G.P."/>
            <person name="Preuss D."/>
            <person name="Nierman W.C."/>
            <person name="White O."/>
            <person name="Eisen J.A."/>
            <person name="Salzberg S.L."/>
            <person name="Fraser C.M."/>
            <person name="Venter J.C."/>
        </authorList>
    </citation>
    <scope>NUCLEOTIDE SEQUENCE [LARGE SCALE GENOMIC DNA]</scope>
    <source>
        <strain>cv. Columbia</strain>
    </source>
</reference>
<reference key="2">
    <citation type="journal article" date="2017" name="Plant J.">
        <title>Araport11: a complete reannotation of the Arabidopsis thaliana reference genome.</title>
        <authorList>
            <person name="Cheng C.Y."/>
            <person name="Krishnakumar V."/>
            <person name="Chan A.P."/>
            <person name="Thibaud-Nissen F."/>
            <person name="Schobel S."/>
            <person name="Town C.D."/>
        </authorList>
    </citation>
    <scope>GENOME REANNOTATION</scope>
    <source>
        <strain>cv. Columbia</strain>
    </source>
</reference>
<reference key="3">
    <citation type="journal article" date="2003" name="Science">
        <title>Empirical analysis of transcriptional activity in the Arabidopsis genome.</title>
        <authorList>
            <person name="Yamada K."/>
            <person name="Lim J."/>
            <person name="Dale J.M."/>
            <person name="Chen H."/>
            <person name="Shinn P."/>
            <person name="Palm C.J."/>
            <person name="Southwick A.M."/>
            <person name="Wu H.C."/>
            <person name="Kim C.J."/>
            <person name="Nguyen M."/>
            <person name="Pham P.K."/>
            <person name="Cheuk R.F."/>
            <person name="Karlin-Newmann G."/>
            <person name="Liu S.X."/>
            <person name="Lam B."/>
            <person name="Sakano H."/>
            <person name="Wu T."/>
            <person name="Yu G."/>
            <person name="Miranda M."/>
            <person name="Quach H.L."/>
            <person name="Tripp M."/>
            <person name="Chang C.H."/>
            <person name="Lee J.M."/>
            <person name="Toriumi M.J."/>
            <person name="Chan M.M."/>
            <person name="Tang C.C."/>
            <person name="Onodera C.S."/>
            <person name="Deng J.M."/>
            <person name="Akiyama K."/>
            <person name="Ansari Y."/>
            <person name="Arakawa T."/>
            <person name="Banh J."/>
            <person name="Banno F."/>
            <person name="Bowser L."/>
            <person name="Brooks S.Y."/>
            <person name="Carninci P."/>
            <person name="Chao Q."/>
            <person name="Choy N."/>
            <person name="Enju A."/>
            <person name="Goldsmith A.D."/>
            <person name="Gurjal M."/>
            <person name="Hansen N.F."/>
            <person name="Hayashizaki Y."/>
            <person name="Johnson-Hopson C."/>
            <person name="Hsuan V.W."/>
            <person name="Iida K."/>
            <person name="Karnes M."/>
            <person name="Khan S."/>
            <person name="Koesema E."/>
            <person name="Ishida J."/>
            <person name="Jiang P.X."/>
            <person name="Jones T."/>
            <person name="Kawai J."/>
            <person name="Kamiya A."/>
            <person name="Meyers C."/>
            <person name="Nakajima M."/>
            <person name="Narusaka M."/>
            <person name="Seki M."/>
            <person name="Sakurai T."/>
            <person name="Satou M."/>
            <person name="Tamse R."/>
            <person name="Vaysberg M."/>
            <person name="Wallender E.K."/>
            <person name="Wong C."/>
            <person name="Yamamura Y."/>
            <person name="Yuan S."/>
            <person name="Shinozaki K."/>
            <person name="Davis R.W."/>
            <person name="Theologis A."/>
            <person name="Ecker J.R."/>
        </authorList>
    </citation>
    <scope>NUCLEOTIDE SEQUENCE [LARGE SCALE MRNA]</scope>
    <source>
        <strain>cv. Columbia</strain>
    </source>
</reference>
<reference key="4">
    <citation type="submission" date="2006-07" db="EMBL/GenBank/DDBJ databases">
        <title>Large-scale analysis of RIKEN Arabidopsis full-length (RAFL) cDNAs.</title>
        <authorList>
            <person name="Totoki Y."/>
            <person name="Seki M."/>
            <person name="Ishida J."/>
            <person name="Nakajima M."/>
            <person name="Enju A."/>
            <person name="Kamiya A."/>
            <person name="Narusaka M."/>
            <person name="Shin-i T."/>
            <person name="Nakagawa M."/>
            <person name="Sakamoto N."/>
            <person name="Oishi K."/>
            <person name="Kohara Y."/>
            <person name="Kobayashi M."/>
            <person name="Toyoda A."/>
            <person name="Sakaki Y."/>
            <person name="Sakurai T."/>
            <person name="Iida K."/>
            <person name="Akiyama K."/>
            <person name="Satou M."/>
            <person name="Toyoda T."/>
            <person name="Konagaya A."/>
            <person name="Carninci P."/>
            <person name="Kawai J."/>
            <person name="Hayashizaki Y."/>
            <person name="Shinozaki K."/>
        </authorList>
    </citation>
    <scope>NUCLEOTIDE SEQUENCE [LARGE SCALE MRNA]</scope>
    <source>
        <strain>cv. Columbia</strain>
    </source>
</reference>
<reference key="5">
    <citation type="journal article" date="2004" name="Plant Cell">
        <title>Genome-wide analysis of Arabidopsis pentatricopeptide repeat proteins reveals their essential role in organelle biogenesis.</title>
        <authorList>
            <person name="Lurin C."/>
            <person name="Andres C."/>
            <person name="Aubourg S."/>
            <person name="Bellaoui M."/>
            <person name="Bitton F."/>
            <person name="Bruyere C."/>
            <person name="Caboche M."/>
            <person name="Debast C."/>
            <person name="Gualberto J."/>
            <person name="Hoffmann B."/>
            <person name="Lecharny A."/>
            <person name="Le Ret M."/>
            <person name="Martin-Magniette M.-L."/>
            <person name="Mireau H."/>
            <person name="Peeters N."/>
            <person name="Renou J.-P."/>
            <person name="Szurek B."/>
            <person name="Taconnat L."/>
            <person name="Small I."/>
        </authorList>
    </citation>
    <scope>GENE FAMILY</scope>
</reference>
<reference key="6">
    <citation type="journal article" date="2023" name="Plant Cell">
        <title>An updated nomenclature for plant ribosomal protein genes.</title>
        <authorList>
            <person name="Scarpin M.R."/>
            <person name="Busche M."/>
            <person name="Martinez R.E."/>
            <person name="Harper L.C."/>
            <person name="Reiser L."/>
            <person name="Szakonyi D."/>
            <person name="Merchante C."/>
            <person name="Lan T."/>
            <person name="Xiong W."/>
            <person name="Mo B."/>
            <person name="Tang G."/>
            <person name="Chen X."/>
            <person name="Bailey-Serres J."/>
            <person name="Browning K.S."/>
            <person name="Brunkard J.O."/>
        </authorList>
    </citation>
    <scope>NOMENCLATURE</scope>
</reference>
<organism>
    <name type="scientific">Arabidopsis thaliana</name>
    <name type="common">Mouse-ear cress</name>
    <dbReference type="NCBI Taxonomy" id="3702"/>
    <lineage>
        <taxon>Eukaryota</taxon>
        <taxon>Viridiplantae</taxon>
        <taxon>Streptophyta</taxon>
        <taxon>Embryophyta</taxon>
        <taxon>Tracheophyta</taxon>
        <taxon>Spermatophyta</taxon>
        <taxon>Magnoliopsida</taxon>
        <taxon>eudicotyledons</taxon>
        <taxon>Gunneridae</taxon>
        <taxon>Pentapetalae</taxon>
        <taxon>rosids</taxon>
        <taxon>malvids</taxon>
        <taxon>Brassicales</taxon>
        <taxon>Brassicaceae</taxon>
        <taxon>Camelineae</taxon>
        <taxon>Arabidopsis</taxon>
    </lineage>
</organism>
<accession>Q9ZUU3</accession>
<gene>
    <name type="ordered locus">At2g37230</name>
    <name type="ORF">F3G5.2</name>
</gene>
<proteinExistence type="evidence at transcript level"/>
<sequence>MAFISRSKRYQSKARVYLSLPRSSNSSLFSLPRLFSTIEETQTPANANPETQSPDAKSETKKNLTSTETRPLRERFQRGKRQNHEKLEDTICRMMDNRAWTTRLQNSIRDLVPEWDHSLVYNVLHGAKKLEHALQFFRWTERSGLIRHDRDTHMKMIKMLGEVSKLNHARCILLDMPEKGVPWDEDMFVVLIESYGKAGIVQESVKIFQKMKDLGVERTIKSYNSLFKVILRRGRYMMAKRYFNKMVSEGVEPTRHTYNLMLWGFFLSLRLETALRFFEDMKTRGISPDDATFNTMINGFCRFKKMDEAEKLFVEMKGNKIGPSVVSYTTMIKGYLAVDRVDDGLRIFEEMRSSGIEPNATTYSTLLPGLCDAGKMVEAKNILKNMMAKHIAPKDNSIFLKLLVSQSKAGDMAAATEVLKAMATLNVPAEAGHYGVLIENQCKASAYNRAIKLLDTLIEKEIILRHQDTLEMEPSAYNPIIEYLCNNGQTAKAEVLFRQLMKRGVQDQDALNNLIRGHAKEGNPDSSYEILKIMSRRGVPRESNAYELLIKSYMSKGEPGDAKTALDSMVEDGHVPDSSLFRSVIESLFEDGRVQTASRVMMIMIDKNVGIEDNMDLIAKILEALLMRGHVEEALGRIDLLNQNGHTADLDSLLSVLSEKGKTIAALKLLDFGLERDLSLEFSSYDKVLDALLGAGKTLNAYSVLCKIMEKGSSTDWKSSDELIKSLNQEGNTKQADVLSRMIKKGQGIKKQNNVSL</sequence>
<name>PP190_ARATH</name>
<evidence type="ECO:0000256" key="1">
    <source>
        <dbReference type="SAM" id="MobiDB-lite"/>
    </source>
</evidence>
<evidence type="ECO:0000303" key="2">
    <source>
    </source>
</evidence>
<evidence type="ECO:0000305" key="3"/>
<keyword id="KW-0496">Mitochondrion</keyword>
<keyword id="KW-1185">Reference proteome</keyword>
<keyword id="KW-0677">Repeat</keyword>
<keyword id="KW-0687">Ribonucleoprotein</keyword>
<keyword id="KW-0689">Ribosomal protein</keyword>
<dbReference type="EMBL" id="AC005896">
    <property type="protein sequence ID" value="AAC98044.1"/>
    <property type="molecule type" value="Genomic_DNA"/>
</dbReference>
<dbReference type="EMBL" id="CP002685">
    <property type="protein sequence ID" value="AEC09370.1"/>
    <property type="molecule type" value="Genomic_DNA"/>
</dbReference>
<dbReference type="EMBL" id="BT005729">
    <property type="protein sequence ID" value="AAO64144.1"/>
    <property type="molecule type" value="mRNA"/>
</dbReference>
<dbReference type="EMBL" id="AK228383">
    <property type="protein sequence ID" value="BAF00321.1"/>
    <property type="molecule type" value="mRNA"/>
</dbReference>
<dbReference type="PIR" id="B84790">
    <property type="entry name" value="B84790"/>
</dbReference>
<dbReference type="RefSeq" id="NP_181260.1">
    <property type="nucleotide sequence ID" value="NM_129279.4"/>
</dbReference>
<dbReference type="SMR" id="Q9ZUU3"/>
<dbReference type="BioGRID" id="3644">
    <property type="interactions" value="1"/>
</dbReference>
<dbReference type="FunCoup" id="Q9ZUU3">
    <property type="interactions" value="1960"/>
</dbReference>
<dbReference type="STRING" id="3702.Q9ZUU3"/>
<dbReference type="iPTMnet" id="Q9ZUU3"/>
<dbReference type="PaxDb" id="3702-AT2G37230.1"/>
<dbReference type="ProteomicsDB" id="249081"/>
<dbReference type="EnsemblPlants" id="AT2G37230.1">
    <property type="protein sequence ID" value="AT2G37230.1"/>
    <property type="gene ID" value="AT2G37230"/>
</dbReference>
<dbReference type="GeneID" id="818300"/>
<dbReference type="Gramene" id="AT2G37230.1">
    <property type="protein sequence ID" value="AT2G37230.1"/>
    <property type="gene ID" value="AT2G37230"/>
</dbReference>
<dbReference type="KEGG" id="ath:AT2G37230"/>
<dbReference type="Araport" id="AT2G37230"/>
<dbReference type="TAIR" id="AT2G37230">
    <property type="gene designation" value="RPPR5"/>
</dbReference>
<dbReference type="eggNOG" id="KOG4197">
    <property type="taxonomic scope" value="Eukaryota"/>
</dbReference>
<dbReference type="HOGENOM" id="CLU_002706_49_24_1"/>
<dbReference type="InParanoid" id="Q9ZUU3"/>
<dbReference type="OMA" id="NMDMAHK"/>
<dbReference type="PhylomeDB" id="Q9ZUU3"/>
<dbReference type="PRO" id="PR:Q9ZUU3"/>
<dbReference type="Proteomes" id="UP000006548">
    <property type="component" value="Chromosome 2"/>
</dbReference>
<dbReference type="ExpressionAtlas" id="Q9ZUU3">
    <property type="expression patterns" value="baseline and differential"/>
</dbReference>
<dbReference type="GO" id="GO:0009534">
    <property type="term" value="C:chloroplast thylakoid"/>
    <property type="evidence" value="ECO:0007005"/>
    <property type="project" value="TAIR"/>
</dbReference>
<dbReference type="GO" id="GO:0009535">
    <property type="term" value="C:chloroplast thylakoid membrane"/>
    <property type="evidence" value="ECO:0007005"/>
    <property type="project" value="TAIR"/>
</dbReference>
<dbReference type="GO" id="GO:0005783">
    <property type="term" value="C:endoplasmic reticulum"/>
    <property type="evidence" value="ECO:0007005"/>
    <property type="project" value="TAIR"/>
</dbReference>
<dbReference type="GO" id="GO:0005739">
    <property type="term" value="C:mitochondrion"/>
    <property type="evidence" value="ECO:0007669"/>
    <property type="project" value="UniProtKB-SubCell"/>
</dbReference>
<dbReference type="GO" id="GO:1990904">
    <property type="term" value="C:ribonucleoprotein complex"/>
    <property type="evidence" value="ECO:0007669"/>
    <property type="project" value="UniProtKB-KW"/>
</dbReference>
<dbReference type="GO" id="GO:0005840">
    <property type="term" value="C:ribosome"/>
    <property type="evidence" value="ECO:0007669"/>
    <property type="project" value="UniProtKB-KW"/>
</dbReference>
<dbReference type="GO" id="GO:0003729">
    <property type="term" value="F:mRNA binding"/>
    <property type="evidence" value="ECO:0000314"/>
    <property type="project" value="TAIR"/>
</dbReference>
<dbReference type="GO" id="GO:0009409">
    <property type="term" value="P:response to cold"/>
    <property type="evidence" value="ECO:0000315"/>
    <property type="project" value="TAIR"/>
</dbReference>
<dbReference type="FunFam" id="1.25.40.10:FF:001501">
    <property type="entry name" value="Pentatricopeptide repeat-containing protein At2g37230"/>
    <property type="match status" value="1"/>
</dbReference>
<dbReference type="Gene3D" id="1.25.40.10">
    <property type="entry name" value="Tetratricopeptide repeat domain"/>
    <property type="match status" value="5"/>
</dbReference>
<dbReference type="InterPro" id="IPR002885">
    <property type="entry name" value="Pentatricopeptide_rpt"/>
</dbReference>
<dbReference type="InterPro" id="IPR050667">
    <property type="entry name" value="PPR-containing_protein"/>
</dbReference>
<dbReference type="InterPro" id="IPR011990">
    <property type="entry name" value="TPR-like_helical_dom_sf"/>
</dbReference>
<dbReference type="NCBIfam" id="TIGR00756">
    <property type="entry name" value="PPR"/>
    <property type="match status" value="8"/>
</dbReference>
<dbReference type="PANTHER" id="PTHR47939">
    <property type="entry name" value="MEMBRANE-ASSOCIATED SALT-INDUCIBLE PROTEIN-LIKE"/>
    <property type="match status" value="1"/>
</dbReference>
<dbReference type="PANTHER" id="PTHR47939:SF13">
    <property type="entry name" value="OS03G0201400 PROTEIN"/>
    <property type="match status" value="1"/>
</dbReference>
<dbReference type="Pfam" id="PF01535">
    <property type="entry name" value="PPR"/>
    <property type="match status" value="3"/>
</dbReference>
<dbReference type="Pfam" id="PF13041">
    <property type="entry name" value="PPR_2"/>
    <property type="match status" value="2"/>
</dbReference>
<dbReference type="Pfam" id="PF13812">
    <property type="entry name" value="PPR_3"/>
    <property type="match status" value="1"/>
</dbReference>
<dbReference type="SUPFAM" id="SSF81901">
    <property type="entry name" value="HCP-like"/>
    <property type="match status" value="1"/>
</dbReference>
<dbReference type="PROSITE" id="PS51375">
    <property type="entry name" value="PPR"/>
    <property type="match status" value="15"/>
</dbReference>
<protein>
    <recommendedName>
        <fullName evidence="2">Large ribosomal subunit protein mL102 (rPPR5)</fullName>
    </recommendedName>
    <alternativeName>
        <fullName>Pentatricopeptide repeat-containing protein At2g37230</fullName>
    </alternativeName>
</protein>
<feature type="chain" id="PRO_0000356049" description="Large ribosomal subunit protein mL102 (rPPR5)">
    <location>
        <begin position="1"/>
        <end position="757"/>
    </location>
</feature>
<feature type="repeat" description="PPR 1">
    <location>
        <begin position="149"/>
        <end position="183"/>
    </location>
</feature>
<feature type="repeat" description="PPR 2">
    <location>
        <begin position="184"/>
        <end position="218"/>
    </location>
</feature>
<feature type="repeat" description="PPR 3">
    <location>
        <begin position="219"/>
        <end position="253"/>
    </location>
</feature>
<feature type="repeat" description="PPR 4">
    <location>
        <begin position="254"/>
        <end position="288"/>
    </location>
</feature>
<feature type="repeat" description="PPR 5">
    <location>
        <begin position="289"/>
        <end position="323"/>
    </location>
</feature>
<feature type="repeat" description="PPR 6">
    <location>
        <begin position="324"/>
        <end position="358"/>
    </location>
</feature>
<feature type="repeat" description="PPR 7">
    <location>
        <begin position="359"/>
        <end position="393"/>
    </location>
</feature>
<feature type="repeat" description="PPR 8">
    <location>
        <begin position="395"/>
        <end position="429"/>
    </location>
</feature>
<feature type="repeat" description="PPR 9">
    <location>
        <begin position="430"/>
        <end position="464"/>
    </location>
</feature>
<feature type="repeat" description="PPR 10">
    <location>
        <begin position="473"/>
        <end position="507"/>
    </location>
</feature>
<feature type="repeat" description="PPR 11">
    <location>
        <begin position="510"/>
        <end position="541"/>
    </location>
</feature>
<feature type="repeat" description="PPR 12">
    <location>
        <begin position="542"/>
        <end position="576"/>
    </location>
</feature>
<feature type="repeat" description="PPR 13">
    <location>
        <begin position="577"/>
        <end position="611"/>
    </location>
</feature>
<feature type="repeat" description="PPR 14">
    <location>
        <begin position="614"/>
        <end position="648"/>
    </location>
</feature>
<feature type="repeat" description="PPR 15">
    <location>
        <begin position="651"/>
        <end position="680"/>
    </location>
</feature>
<feature type="repeat" description="PPR 16">
    <location>
        <begin position="681"/>
        <end position="715"/>
    </location>
</feature>
<feature type="region of interest" description="Disordered" evidence="1">
    <location>
        <begin position="39"/>
        <end position="82"/>
    </location>
</feature>
<feature type="compositionally biased region" description="Polar residues" evidence="1">
    <location>
        <begin position="39"/>
        <end position="55"/>
    </location>
</feature>
<feature type="compositionally biased region" description="Basic and acidic residues" evidence="1">
    <location>
        <begin position="70"/>
        <end position="82"/>
    </location>
</feature>